<evidence type="ECO:0000255" key="1">
    <source>
        <dbReference type="HAMAP-Rule" id="MF_01656"/>
    </source>
</evidence>
<protein>
    <recommendedName>
        <fullName evidence="1">4-hydroxy-2-oxovalerate aldolase 2</fullName>
        <shortName evidence="1">HOA 2</shortName>
        <ecNumber evidence="1">4.1.3.39</ecNumber>
    </recommendedName>
    <alternativeName>
        <fullName evidence="1">4-hydroxy-2-keto-pentanoic acid aldolase 2</fullName>
    </alternativeName>
    <alternativeName>
        <fullName evidence="1">4-hydroxy-2-oxopentanoate aldolase 2</fullName>
    </alternativeName>
</protein>
<dbReference type="EC" id="4.1.3.39" evidence="1"/>
<dbReference type="EMBL" id="CP000520">
    <property type="protein sequence ID" value="ABL95009.1"/>
    <property type="molecule type" value="Genomic_DNA"/>
</dbReference>
<dbReference type="SMR" id="A1UQA1"/>
<dbReference type="KEGG" id="mkm:Mkms_5835"/>
<dbReference type="HOGENOM" id="CLU_049173_0_0_11"/>
<dbReference type="OrthoDB" id="9803573at2"/>
<dbReference type="GO" id="GO:0003852">
    <property type="term" value="F:2-isopropylmalate synthase activity"/>
    <property type="evidence" value="ECO:0007669"/>
    <property type="project" value="TreeGrafter"/>
</dbReference>
<dbReference type="GO" id="GO:0008701">
    <property type="term" value="F:4-hydroxy-2-oxovalerate aldolase activity"/>
    <property type="evidence" value="ECO:0007669"/>
    <property type="project" value="UniProtKB-UniRule"/>
</dbReference>
<dbReference type="GO" id="GO:0030145">
    <property type="term" value="F:manganese ion binding"/>
    <property type="evidence" value="ECO:0007669"/>
    <property type="project" value="UniProtKB-UniRule"/>
</dbReference>
<dbReference type="GO" id="GO:0009056">
    <property type="term" value="P:catabolic process"/>
    <property type="evidence" value="ECO:0007669"/>
    <property type="project" value="UniProtKB-KW"/>
</dbReference>
<dbReference type="GO" id="GO:0009098">
    <property type="term" value="P:L-leucine biosynthetic process"/>
    <property type="evidence" value="ECO:0007669"/>
    <property type="project" value="TreeGrafter"/>
</dbReference>
<dbReference type="CDD" id="cd07943">
    <property type="entry name" value="DRE_TIM_HOA"/>
    <property type="match status" value="1"/>
</dbReference>
<dbReference type="Gene3D" id="1.10.8.60">
    <property type="match status" value="1"/>
</dbReference>
<dbReference type="Gene3D" id="3.20.20.70">
    <property type="entry name" value="Aldolase class I"/>
    <property type="match status" value="1"/>
</dbReference>
<dbReference type="HAMAP" id="MF_01656">
    <property type="entry name" value="HOA"/>
    <property type="match status" value="1"/>
</dbReference>
<dbReference type="InterPro" id="IPR050073">
    <property type="entry name" value="2-IPM_HCS-like"/>
</dbReference>
<dbReference type="InterPro" id="IPR017629">
    <property type="entry name" value="4OH_2_O-val_aldolase"/>
</dbReference>
<dbReference type="InterPro" id="IPR013785">
    <property type="entry name" value="Aldolase_TIM"/>
</dbReference>
<dbReference type="InterPro" id="IPR012425">
    <property type="entry name" value="DmpG_comm"/>
</dbReference>
<dbReference type="InterPro" id="IPR035685">
    <property type="entry name" value="DRE_TIM_HOA"/>
</dbReference>
<dbReference type="InterPro" id="IPR000891">
    <property type="entry name" value="PYR_CT"/>
</dbReference>
<dbReference type="NCBIfam" id="TIGR03217">
    <property type="entry name" value="4OH_2_O_val_ald"/>
    <property type="match status" value="1"/>
</dbReference>
<dbReference type="NCBIfam" id="NF006049">
    <property type="entry name" value="PRK08195.1"/>
    <property type="match status" value="1"/>
</dbReference>
<dbReference type="PANTHER" id="PTHR10277:SF9">
    <property type="entry name" value="2-ISOPROPYLMALATE SYNTHASE 1, CHLOROPLASTIC-RELATED"/>
    <property type="match status" value="1"/>
</dbReference>
<dbReference type="PANTHER" id="PTHR10277">
    <property type="entry name" value="HOMOCITRATE SYNTHASE-RELATED"/>
    <property type="match status" value="1"/>
</dbReference>
<dbReference type="Pfam" id="PF07836">
    <property type="entry name" value="DmpG_comm"/>
    <property type="match status" value="1"/>
</dbReference>
<dbReference type="Pfam" id="PF00682">
    <property type="entry name" value="HMGL-like"/>
    <property type="match status" value="1"/>
</dbReference>
<dbReference type="SUPFAM" id="SSF51569">
    <property type="entry name" value="Aldolase"/>
    <property type="match status" value="1"/>
</dbReference>
<dbReference type="SUPFAM" id="SSF89000">
    <property type="entry name" value="post-HMGL domain-like"/>
    <property type="match status" value="1"/>
</dbReference>
<dbReference type="PROSITE" id="PS50991">
    <property type="entry name" value="PYR_CT"/>
    <property type="match status" value="1"/>
</dbReference>
<accession>A1UQA1</accession>
<geneLocation type="plasmid">
    <name>pMKMS02</name>
</geneLocation>
<feature type="chain" id="PRO_0000387859" description="4-hydroxy-2-oxovalerate aldolase 2">
    <location>
        <begin position="1"/>
        <end position="349"/>
    </location>
</feature>
<feature type="domain" description="Pyruvate carboxyltransferase" evidence="1">
    <location>
        <begin position="16"/>
        <end position="268"/>
    </location>
</feature>
<feature type="active site" description="Proton acceptor" evidence="1">
    <location>
        <position position="28"/>
    </location>
</feature>
<feature type="binding site" evidence="1">
    <location>
        <begin position="24"/>
        <end position="25"/>
    </location>
    <ligand>
        <name>substrate</name>
    </ligand>
</feature>
<feature type="binding site" evidence="1">
    <location>
        <position position="25"/>
    </location>
    <ligand>
        <name>Mn(2+)</name>
        <dbReference type="ChEBI" id="CHEBI:29035"/>
    </ligand>
</feature>
<feature type="binding site" evidence="1">
    <location>
        <position position="178"/>
    </location>
    <ligand>
        <name>substrate</name>
    </ligand>
</feature>
<feature type="binding site" evidence="1">
    <location>
        <position position="207"/>
    </location>
    <ligand>
        <name>Mn(2+)</name>
        <dbReference type="ChEBI" id="CHEBI:29035"/>
    </ligand>
</feature>
<feature type="binding site" evidence="1">
    <location>
        <position position="207"/>
    </location>
    <ligand>
        <name>substrate</name>
    </ligand>
</feature>
<feature type="binding site" evidence="1">
    <location>
        <position position="209"/>
    </location>
    <ligand>
        <name>Mn(2+)</name>
        <dbReference type="ChEBI" id="CHEBI:29035"/>
    </ligand>
</feature>
<feature type="binding site" evidence="1">
    <location>
        <position position="298"/>
    </location>
    <ligand>
        <name>substrate</name>
    </ligand>
</feature>
<feature type="site" description="Transition state stabilizer" evidence="1">
    <location>
        <position position="24"/>
    </location>
</feature>
<comment type="catalytic activity">
    <reaction evidence="1">
        <text>(S)-4-hydroxy-2-oxopentanoate = acetaldehyde + pyruvate</text>
        <dbReference type="Rhea" id="RHEA:22624"/>
        <dbReference type="ChEBI" id="CHEBI:15343"/>
        <dbReference type="ChEBI" id="CHEBI:15361"/>
        <dbReference type="ChEBI" id="CHEBI:73143"/>
        <dbReference type="EC" id="4.1.3.39"/>
    </reaction>
</comment>
<comment type="similarity">
    <text evidence="1">Belongs to the 4-hydroxy-2-oxovalerate aldolase family.</text>
</comment>
<keyword id="KW-0058">Aromatic hydrocarbons catabolism</keyword>
<keyword id="KW-0456">Lyase</keyword>
<keyword id="KW-0464">Manganese</keyword>
<keyword id="KW-0479">Metal-binding</keyword>
<keyword id="KW-0614">Plasmid</keyword>
<sequence length="349" mass="37196">MTETVSRPHATEGAALYIQDVTLRDGMHAMRHRISPEKVAAIAGALDTAGVDAIEVTHGDGLAGHSLTYGPGSNTDWEWIEAAADVVHRAKLTTLLLPGVGTVRELEHAYKLGVTSVRVATHCTEADVSAQHIGTARELGMDVSGFLMMSHLAEPSHLAAQAKLMESYGAHCVYVTDSGGRLTMGSVRDRVRAYRDVLDAGTQIGIHAHQNLSLSVANTVVAVEEGVTRVDASLAGHGAGAGNCPIEPFIAVADLHGWKHNCDLFGLQDAADDIVRPLQDRPVQVDRETLTLGYAGVYSSFLRHAEAAAKQYGLDTRAILLAVGERGLVGGQEDLIPDIALDLQQNLRR</sequence>
<reference key="1">
    <citation type="submission" date="2006-12" db="EMBL/GenBank/DDBJ databases">
        <title>Complete sequence of plasmid pMKMS02 of Mycobacterium sp. KMS.</title>
        <authorList>
            <consortium name="US DOE Joint Genome Institute"/>
            <person name="Copeland A."/>
            <person name="Lucas S."/>
            <person name="Lapidus A."/>
            <person name="Barry K."/>
            <person name="Detter J.C."/>
            <person name="Glavina del Rio T."/>
            <person name="Hammon N."/>
            <person name="Israni S."/>
            <person name="Dalin E."/>
            <person name="Tice H."/>
            <person name="Pitluck S."/>
            <person name="Kiss H."/>
            <person name="Brettin T."/>
            <person name="Bruce D."/>
            <person name="Han C."/>
            <person name="Tapia R."/>
            <person name="Gilna P."/>
            <person name="Schmutz J."/>
            <person name="Larimer F."/>
            <person name="Land M."/>
            <person name="Hauser L."/>
            <person name="Kyrpides N."/>
            <person name="Mikhailova N."/>
            <person name="Miller C.D."/>
            <person name="Richardson P."/>
        </authorList>
    </citation>
    <scope>NUCLEOTIDE SEQUENCE [LARGE SCALE GENOMIC DNA]</scope>
    <source>
        <strain>KMS</strain>
    </source>
</reference>
<name>HOA2_MYCSK</name>
<proteinExistence type="inferred from homology"/>
<organism>
    <name type="scientific">Mycobacterium sp. (strain KMS)</name>
    <dbReference type="NCBI Taxonomy" id="189918"/>
    <lineage>
        <taxon>Bacteria</taxon>
        <taxon>Bacillati</taxon>
        <taxon>Actinomycetota</taxon>
        <taxon>Actinomycetes</taxon>
        <taxon>Mycobacteriales</taxon>
        <taxon>Mycobacteriaceae</taxon>
        <taxon>Mycobacterium</taxon>
    </lineage>
</organism>
<gene>
    <name type="ordered locus">Mkms_5835</name>
</gene>